<organism>
    <name type="scientific">Burkholderia pseudomallei (strain K96243)</name>
    <dbReference type="NCBI Taxonomy" id="272560"/>
    <lineage>
        <taxon>Bacteria</taxon>
        <taxon>Pseudomonadati</taxon>
        <taxon>Pseudomonadota</taxon>
        <taxon>Betaproteobacteria</taxon>
        <taxon>Burkholderiales</taxon>
        <taxon>Burkholderiaceae</taxon>
        <taxon>Burkholderia</taxon>
        <taxon>pseudomallei group</taxon>
    </lineage>
</organism>
<reference key="1">
    <citation type="journal article" date="2004" name="Proc. Natl. Acad. Sci. U.S.A.">
        <title>Genomic plasticity of the causative agent of melioidosis, Burkholderia pseudomallei.</title>
        <authorList>
            <person name="Holden M.T.G."/>
            <person name="Titball R.W."/>
            <person name="Peacock S.J."/>
            <person name="Cerdeno-Tarraga A.-M."/>
            <person name="Atkins T."/>
            <person name="Crossman L.C."/>
            <person name="Pitt T."/>
            <person name="Churcher C."/>
            <person name="Mungall K.L."/>
            <person name="Bentley S.D."/>
            <person name="Sebaihia M."/>
            <person name="Thomson N.R."/>
            <person name="Bason N."/>
            <person name="Beacham I.R."/>
            <person name="Brooks K."/>
            <person name="Brown K.A."/>
            <person name="Brown N.F."/>
            <person name="Challis G.L."/>
            <person name="Cherevach I."/>
            <person name="Chillingworth T."/>
            <person name="Cronin A."/>
            <person name="Crossett B."/>
            <person name="Davis P."/>
            <person name="DeShazer D."/>
            <person name="Feltwell T."/>
            <person name="Fraser A."/>
            <person name="Hance Z."/>
            <person name="Hauser H."/>
            <person name="Holroyd S."/>
            <person name="Jagels K."/>
            <person name="Keith K.E."/>
            <person name="Maddison M."/>
            <person name="Moule S."/>
            <person name="Price C."/>
            <person name="Quail M.A."/>
            <person name="Rabbinowitsch E."/>
            <person name="Rutherford K."/>
            <person name="Sanders M."/>
            <person name="Simmonds M."/>
            <person name="Songsivilai S."/>
            <person name="Stevens K."/>
            <person name="Tumapa S."/>
            <person name="Vesaratchavest M."/>
            <person name="Whitehead S."/>
            <person name="Yeats C."/>
            <person name="Barrell B.G."/>
            <person name="Oyston P.C.F."/>
            <person name="Parkhill J."/>
        </authorList>
    </citation>
    <scope>NUCLEOTIDE SEQUENCE [LARGE SCALE GENOMIC DNA]</scope>
    <source>
        <strain>K96243</strain>
    </source>
</reference>
<sequence>MALAKRIIPCLDVTAGRVVKGVNFVELRDAGDPVEIARRYDAQGADELTFLDITATSDGRDLILPIIEAVASQVFIPLTVGGGVRAVEDVRRLLNAGADKVSMNSSAVANPPLVRDAADKYGSQCIVVAIDAKRVSADGEPPRWEVFTHGGRKGTGLDAVEWARKMAELGAGEILLTSMDRDGTKAGFDLALTRAVSDAVPVPVIASGGVGSLEHLAAGITEGHADAVLAASIFHYGEHTVGEAKRFMAERGIAVRL</sequence>
<protein>
    <recommendedName>
        <fullName evidence="1">Imidazole glycerol phosphate synthase subunit HisF</fullName>
        <ecNumber evidence="1">4.3.2.10</ecNumber>
    </recommendedName>
    <alternativeName>
        <fullName evidence="1">IGP synthase cyclase subunit</fullName>
    </alternativeName>
    <alternativeName>
        <fullName evidence="1">IGP synthase subunit HisF</fullName>
    </alternativeName>
    <alternativeName>
        <fullName evidence="1">ImGP synthase subunit HisF</fullName>
        <shortName evidence="1">IGPS subunit HisF</shortName>
    </alternativeName>
</protein>
<comment type="function">
    <text evidence="1">IGPS catalyzes the conversion of PRFAR and glutamine to IGP, AICAR and glutamate. The HisF subunit catalyzes the cyclization activity that produces IGP and AICAR from PRFAR using the ammonia provided by the HisH subunit.</text>
</comment>
<comment type="catalytic activity">
    <reaction evidence="1">
        <text>5-[(5-phospho-1-deoxy-D-ribulos-1-ylimino)methylamino]-1-(5-phospho-beta-D-ribosyl)imidazole-4-carboxamide + L-glutamine = D-erythro-1-(imidazol-4-yl)glycerol 3-phosphate + 5-amino-1-(5-phospho-beta-D-ribosyl)imidazole-4-carboxamide + L-glutamate + H(+)</text>
        <dbReference type="Rhea" id="RHEA:24793"/>
        <dbReference type="ChEBI" id="CHEBI:15378"/>
        <dbReference type="ChEBI" id="CHEBI:29985"/>
        <dbReference type="ChEBI" id="CHEBI:58278"/>
        <dbReference type="ChEBI" id="CHEBI:58359"/>
        <dbReference type="ChEBI" id="CHEBI:58475"/>
        <dbReference type="ChEBI" id="CHEBI:58525"/>
        <dbReference type="EC" id="4.3.2.10"/>
    </reaction>
</comment>
<comment type="pathway">
    <text evidence="1">Amino-acid biosynthesis; L-histidine biosynthesis; L-histidine from 5-phospho-alpha-D-ribose 1-diphosphate: step 5/9.</text>
</comment>
<comment type="subunit">
    <text evidence="1">Heterodimer of HisH and HisF.</text>
</comment>
<comment type="subcellular location">
    <subcellularLocation>
        <location evidence="1">Cytoplasm</location>
    </subcellularLocation>
</comment>
<comment type="similarity">
    <text evidence="1">Belongs to the HisA/HisF family.</text>
</comment>
<comment type="sequence caution" evidence="2">
    <conflict type="erroneous initiation">
        <sequence resource="EMBL-CDS" id="CAH37143"/>
    </conflict>
</comment>
<keyword id="KW-0028">Amino-acid biosynthesis</keyword>
<keyword id="KW-0963">Cytoplasm</keyword>
<keyword id="KW-0368">Histidine biosynthesis</keyword>
<keyword id="KW-0456">Lyase</keyword>
<keyword id="KW-1185">Reference proteome</keyword>
<proteinExistence type="inferred from homology"/>
<feature type="chain" id="PRO_0000142137" description="Imidazole glycerol phosphate synthase subunit HisF">
    <location>
        <begin position="1"/>
        <end position="257"/>
    </location>
</feature>
<feature type="active site" evidence="1">
    <location>
        <position position="12"/>
    </location>
</feature>
<feature type="active site" evidence="1">
    <location>
        <position position="131"/>
    </location>
</feature>
<name>HIS6_BURPS</name>
<accession>Q63Q92</accession>
<gene>
    <name evidence="1" type="primary">hisF</name>
    <name type="ordered locus">BPSL3133</name>
</gene>
<dbReference type="EC" id="4.3.2.10" evidence="1"/>
<dbReference type="EMBL" id="BX571965">
    <property type="protein sequence ID" value="CAH37143.1"/>
    <property type="status" value="ALT_INIT"/>
    <property type="molecule type" value="Genomic_DNA"/>
</dbReference>
<dbReference type="RefSeq" id="WP_004550994.1">
    <property type="nucleotide sequence ID" value="NZ_CP009538.1"/>
</dbReference>
<dbReference type="RefSeq" id="YP_109726.2">
    <property type="nucleotide sequence ID" value="NC_006350.1"/>
</dbReference>
<dbReference type="SMR" id="Q63Q92"/>
<dbReference type="STRING" id="272560.BPSL3133"/>
<dbReference type="GeneID" id="93061750"/>
<dbReference type="KEGG" id="bps:BPSL3133"/>
<dbReference type="PATRIC" id="fig|272560.51.peg.2110"/>
<dbReference type="eggNOG" id="COG0107">
    <property type="taxonomic scope" value="Bacteria"/>
</dbReference>
<dbReference type="UniPathway" id="UPA00031">
    <property type="reaction ID" value="UER00010"/>
</dbReference>
<dbReference type="Proteomes" id="UP000000605">
    <property type="component" value="Chromosome 1"/>
</dbReference>
<dbReference type="GO" id="GO:0005737">
    <property type="term" value="C:cytoplasm"/>
    <property type="evidence" value="ECO:0007669"/>
    <property type="project" value="UniProtKB-SubCell"/>
</dbReference>
<dbReference type="GO" id="GO:0000107">
    <property type="term" value="F:imidazoleglycerol-phosphate synthase activity"/>
    <property type="evidence" value="ECO:0007669"/>
    <property type="project" value="UniProtKB-UniRule"/>
</dbReference>
<dbReference type="GO" id="GO:0016829">
    <property type="term" value="F:lyase activity"/>
    <property type="evidence" value="ECO:0007669"/>
    <property type="project" value="UniProtKB-KW"/>
</dbReference>
<dbReference type="GO" id="GO:0000105">
    <property type="term" value="P:L-histidine biosynthetic process"/>
    <property type="evidence" value="ECO:0007669"/>
    <property type="project" value="UniProtKB-UniRule"/>
</dbReference>
<dbReference type="CDD" id="cd04731">
    <property type="entry name" value="HisF"/>
    <property type="match status" value="1"/>
</dbReference>
<dbReference type="FunFam" id="3.20.20.70:FF:000006">
    <property type="entry name" value="Imidazole glycerol phosphate synthase subunit HisF"/>
    <property type="match status" value="1"/>
</dbReference>
<dbReference type="Gene3D" id="3.20.20.70">
    <property type="entry name" value="Aldolase class I"/>
    <property type="match status" value="1"/>
</dbReference>
<dbReference type="HAMAP" id="MF_01013">
    <property type="entry name" value="HisF"/>
    <property type="match status" value="1"/>
</dbReference>
<dbReference type="InterPro" id="IPR013785">
    <property type="entry name" value="Aldolase_TIM"/>
</dbReference>
<dbReference type="InterPro" id="IPR006062">
    <property type="entry name" value="His_biosynth"/>
</dbReference>
<dbReference type="InterPro" id="IPR004651">
    <property type="entry name" value="HisF"/>
</dbReference>
<dbReference type="InterPro" id="IPR050064">
    <property type="entry name" value="IGPS_HisA/HisF"/>
</dbReference>
<dbReference type="InterPro" id="IPR011060">
    <property type="entry name" value="RibuloseP-bd_barrel"/>
</dbReference>
<dbReference type="NCBIfam" id="TIGR00735">
    <property type="entry name" value="hisF"/>
    <property type="match status" value="1"/>
</dbReference>
<dbReference type="PANTHER" id="PTHR21235:SF2">
    <property type="entry name" value="IMIDAZOLE GLYCEROL PHOSPHATE SYNTHASE HISHF"/>
    <property type="match status" value="1"/>
</dbReference>
<dbReference type="PANTHER" id="PTHR21235">
    <property type="entry name" value="IMIDAZOLE GLYCEROL PHOSPHATE SYNTHASE SUBUNIT HISF/H IGP SYNTHASE SUBUNIT HISF/H"/>
    <property type="match status" value="1"/>
</dbReference>
<dbReference type="Pfam" id="PF00977">
    <property type="entry name" value="His_biosynth"/>
    <property type="match status" value="1"/>
</dbReference>
<dbReference type="SUPFAM" id="SSF51366">
    <property type="entry name" value="Ribulose-phoshate binding barrel"/>
    <property type="match status" value="1"/>
</dbReference>
<evidence type="ECO:0000255" key="1">
    <source>
        <dbReference type="HAMAP-Rule" id="MF_01013"/>
    </source>
</evidence>
<evidence type="ECO:0000305" key="2"/>